<organism>
    <name type="scientific">Shigella dysenteriae serotype 1 (strain Sd197)</name>
    <dbReference type="NCBI Taxonomy" id="300267"/>
    <lineage>
        <taxon>Bacteria</taxon>
        <taxon>Pseudomonadati</taxon>
        <taxon>Pseudomonadota</taxon>
        <taxon>Gammaproteobacteria</taxon>
        <taxon>Enterobacterales</taxon>
        <taxon>Enterobacteriaceae</taxon>
        <taxon>Shigella</taxon>
    </lineage>
</organism>
<comment type="function">
    <text evidence="1">Cytoskeletal protein that is involved in cell-shape control through regulation of the length of the long axis.</text>
</comment>
<comment type="subcellular location">
    <subcellularLocation>
        <location evidence="1">Cell inner membrane</location>
        <topology evidence="1">Single-pass type II membrane protein</topology>
    </subcellularLocation>
    <text evidence="1">Forms helical filaments along the long axis of the cell.</text>
</comment>
<comment type="domain">
    <text evidence="1">The helix-turn-helix (HTH) motif in the cytoplasmic domain of the N-terminus is involved in the formation of spirals to maintain the rigid rod shape. As this protein is anchored in the cytoplasmic membrane, the HTH motif may contribute to protein-protein interactions to form the RodZ helix, which is localized beneath the cytoplasmic membrane. The C-terminal domain may be critical for determination of the rod shape by probably interacting with enzymes required for synthesis of the peptidoglycan layer, including PBPs in the periplasm.</text>
</comment>
<comment type="similarity">
    <text evidence="1">Belongs to the RodZ family.</text>
</comment>
<gene>
    <name evidence="1" type="primary">rodZ</name>
    <name type="ordered locus">SDY_2712</name>
</gene>
<reference key="1">
    <citation type="journal article" date="2005" name="Nucleic Acids Res.">
        <title>Genome dynamics and diversity of Shigella species, the etiologic agents of bacillary dysentery.</title>
        <authorList>
            <person name="Yang F."/>
            <person name="Yang J."/>
            <person name="Zhang X."/>
            <person name="Chen L."/>
            <person name="Jiang Y."/>
            <person name="Yan Y."/>
            <person name="Tang X."/>
            <person name="Wang J."/>
            <person name="Xiong Z."/>
            <person name="Dong J."/>
            <person name="Xue Y."/>
            <person name="Zhu Y."/>
            <person name="Xu X."/>
            <person name="Sun L."/>
            <person name="Chen S."/>
            <person name="Nie H."/>
            <person name="Peng J."/>
            <person name="Xu J."/>
            <person name="Wang Y."/>
            <person name="Yuan Z."/>
            <person name="Wen Y."/>
            <person name="Yao Z."/>
            <person name="Shen Y."/>
            <person name="Qiang B."/>
            <person name="Hou Y."/>
            <person name="Yu J."/>
            <person name="Jin Q."/>
        </authorList>
    </citation>
    <scope>NUCLEOTIDE SEQUENCE [LARGE SCALE GENOMIC DNA]</scope>
    <source>
        <strain>Sd197</strain>
    </source>
</reference>
<feature type="chain" id="PRO_0000361864" description="Cytoskeleton protein RodZ">
    <location>
        <begin position="1"/>
        <end position="337"/>
    </location>
</feature>
<feature type="topological domain" description="Cytoplasmic" evidence="1">
    <location>
        <begin position="1"/>
        <end position="111"/>
    </location>
</feature>
<feature type="transmembrane region" description="Helical; Signal-anchor for type II membrane protein" evidence="1">
    <location>
        <begin position="112"/>
        <end position="132"/>
    </location>
</feature>
<feature type="topological domain" description="Periplasmic" evidence="1">
    <location>
        <begin position="133"/>
        <end position="337"/>
    </location>
</feature>
<feature type="domain" description="HTH cro/C1-type" evidence="1">
    <location>
        <begin position="19"/>
        <end position="71"/>
    </location>
</feature>
<feature type="DNA-binding region" description="H-T-H motif" evidence="1">
    <location>
        <begin position="30"/>
        <end position="49"/>
    </location>
</feature>
<feature type="region of interest" description="Disordered" evidence="2">
    <location>
        <begin position="145"/>
        <end position="218"/>
    </location>
</feature>
<feature type="compositionally biased region" description="Polar residues" evidence="2">
    <location>
        <begin position="145"/>
        <end position="167"/>
    </location>
</feature>
<feature type="compositionally biased region" description="Low complexity" evidence="2">
    <location>
        <begin position="168"/>
        <end position="207"/>
    </location>
</feature>
<feature type="compositionally biased region" description="Polar residues" evidence="2">
    <location>
        <begin position="208"/>
        <end position="218"/>
    </location>
</feature>
<dbReference type="EMBL" id="CP000034">
    <property type="protein sequence ID" value="ABB62759.1"/>
    <property type="molecule type" value="Genomic_DNA"/>
</dbReference>
<dbReference type="RefSeq" id="WP_001090858.1">
    <property type="nucleotide sequence ID" value="NC_007606.1"/>
</dbReference>
<dbReference type="RefSeq" id="YP_404250.1">
    <property type="nucleotide sequence ID" value="NC_007606.1"/>
</dbReference>
<dbReference type="SMR" id="Q32D46"/>
<dbReference type="STRING" id="300267.SDY_2712"/>
<dbReference type="EnsemblBacteria" id="ABB62759">
    <property type="protein sequence ID" value="ABB62759"/>
    <property type="gene ID" value="SDY_2712"/>
</dbReference>
<dbReference type="KEGG" id="sdy:SDY_2712"/>
<dbReference type="PATRIC" id="fig|300267.13.peg.3270"/>
<dbReference type="HOGENOM" id="CLU_047530_3_1_6"/>
<dbReference type="Proteomes" id="UP000002716">
    <property type="component" value="Chromosome"/>
</dbReference>
<dbReference type="GO" id="GO:0005886">
    <property type="term" value="C:plasma membrane"/>
    <property type="evidence" value="ECO:0007669"/>
    <property type="project" value="UniProtKB-SubCell"/>
</dbReference>
<dbReference type="GO" id="GO:0003677">
    <property type="term" value="F:DNA binding"/>
    <property type="evidence" value="ECO:0007669"/>
    <property type="project" value="UniProtKB-KW"/>
</dbReference>
<dbReference type="GO" id="GO:0008360">
    <property type="term" value="P:regulation of cell shape"/>
    <property type="evidence" value="ECO:0007669"/>
    <property type="project" value="UniProtKB-UniRule"/>
</dbReference>
<dbReference type="CDD" id="cd00093">
    <property type="entry name" value="HTH_XRE"/>
    <property type="match status" value="1"/>
</dbReference>
<dbReference type="FunFam" id="1.10.260.40:FF:000014">
    <property type="entry name" value="Cytoskeleton protein RodZ"/>
    <property type="match status" value="1"/>
</dbReference>
<dbReference type="Gene3D" id="1.10.260.40">
    <property type="entry name" value="lambda repressor-like DNA-binding domains"/>
    <property type="match status" value="1"/>
</dbReference>
<dbReference type="HAMAP" id="MF_02017">
    <property type="entry name" value="RodZ"/>
    <property type="match status" value="1"/>
</dbReference>
<dbReference type="InterPro" id="IPR050400">
    <property type="entry name" value="Bact_Cytoskel_RodZ"/>
</dbReference>
<dbReference type="InterPro" id="IPR001387">
    <property type="entry name" value="Cro/C1-type_HTH"/>
</dbReference>
<dbReference type="InterPro" id="IPR010982">
    <property type="entry name" value="Lambda_DNA-bd_dom_sf"/>
</dbReference>
<dbReference type="InterPro" id="IPR023690">
    <property type="entry name" value="RodZ"/>
</dbReference>
<dbReference type="InterPro" id="IPR025194">
    <property type="entry name" value="RodZ-like_C"/>
</dbReference>
<dbReference type="NCBIfam" id="NF008109">
    <property type="entry name" value="PRK10856.1"/>
    <property type="match status" value="1"/>
</dbReference>
<dbReference type="PANTHER" id="PTHR34475">
    <property type="match status" value="1"/>
</dbReference>
<dbReference type="PANTHER" id="PTHR34475:SF1">
    <property type="entry name" value="CYTOSKELETON PROTEIN RODZ"/>
    <property type="match status" value="1"/>
</dbReference>
<dbReference type="Pfam" id="PF13413">
    <property type="entry name" value="HTH_25"/>
    <property type="match status" value="1"/>
</dbReference>
<dbReference type="Pfam" id="PF13464">
    <property type="entry name" value="RodZ_C"/>
    <property type="match status" value="1"/>
</dbReference>
<dbReference type="SMART" id="SM00530">
    <property type="entry name" value="HTH_XRE"/>
    <property type="match status" value="1"/>
</dbReference>
<dbReference type="SUPFAM" id="SSF47413">
    <property type="entry name" value="lambda repressor-like DNA-binding domains"/>
    <property type="match status" value="1"/>
</dbReference>
<dbReference type="PROSITE" id="PS50943">
    <property type="entry name" value="HTH_CROC1"/>
    <property type="match status" value="1"/>
</dbReference>
<sequence>MNTEATHDQNEALTTGARLRNAREQLGLSQQAVAERLCLKVSTVRDIEEDKAPADLASTFLRGYIRSYARLVHIPEEELLPGLEKQAPLRAAKVAPMQSFSLGKRRKKRDGWLMTFTWLVLFVVIGLSGAWWWQDHKAQQEEITTMADQSSAELSSNSEQGQSVPLNTSTTTDPATTSTPPASVDTTATNTQTPAVTAPAPAVDPQQNAVVSPSQANVDTAATPVPTAATTPDGAAPLPTDQAGVTTPVADPNALVMNFTADCWLEVTDATGKKLFSGMQRKDGNLNLTGQAPYKLKIGAPAAVQIQYQGKPVDLSRFIRTNQVARLTLNAEQSPAQ</sequence>
<accession>Q32D46</accession>
<proteinExistence type="inferred from homology"/>
<name>RODZ_SHIDS</name>
<keyword id="KW-0997">Cell inner membrane</keyword>
<keyword id="KW-1003">Cell membrane</keyword>
<keyword id="KW-0133">Cell shape</keyword>
<keyword id="KW-0238">DNA-binding</keyword>
<keyword id="KW-0472">Membrane</keyword>
<keyword id="KW-1185">Reference proteome</keyword>
<keyword id="KW-0735">Signal-anchor</keyword>
<keyword id="KW-0812">Transmembrane</keyword>
<keyword id="KW-1133">Transmembrane helix</keyword>
<protein>
    <recommendedName>
        <fullName evidence="1">Cytoskeleton protein RodZ</fullName>
    </recommendedName>
</protein>
<evidence type="ECO:0000255" key="1">
    <source>
        <dbReference type="HAMAP-Rule" id="MF_02017"/>
    </source>
</evidence>
<evidence type="ECO:0000256" key="2">
    <source>
        <dbReference type="SAM" id="MobiDB-lite"/>
    </source>
</evidence>